<comment type="function">
    <text evidence="1">Catalyzes the NAD-dependent reduction of succinylglutamate semialdehyde into succinylglutamate.</text>
</comment>
<comment type="catalytic activity">
    <reaction evidence="1">
        <text>N-succinyl-L-glutamate 5-semialdehyde + NAD(+) + H2O = N-succinyl-L-glutamate + NADH + 2 H(+)</text>
        <dbReference type="Rhea" id="RHEA:10812"/>
        <dbReference type="ChEBI" id="CHEBI:15377"/>
        <dbReference type="ChEBI" id="CHEBI:15378"/>
        <dbReference type="ChEBI" id="CHEBI:57540"/>
        <dbReference type="ChEBI" id="CHEBI:57945"/>
        <dbReference type="ChEBI" id="CHEBI:58520"/>
        <dbReference type="ChEBI" id="CHEBI:58763"/>
        <dbReference type="EC" id="1.2.1.71"/>
    </reaction>
</comment>
<comment type="pathway">
    <text evidence="1">Amino-acid degradation; L-arginine degradation via AST pathway; L-glutamate and succinate from L-arginine: step 4/5.</text>
</comment>
<comment type="similarity">
    <text evidence="1">Belongs to the aldehyde dehydrogenase family. AstD subfamily.</text>
</comment>
<reference key="1">
    <citation type="submission" date="2007-08" db="EMBL/GenBank/DDBJ databases">
        <title>Complete sequence of Shewanella sediminis HAW-EB3.</title>
        <authorList>
            <consortium name="US DOE Joint Genome Institute"/>
            <person name="Copeland A."/>
            <person name="Lucas S."/>
            <person name="Lapidus A."/>
            <person name="Barry K."/>
            <person name="Glavina del Rio T."/>
            <person name="Dalin E."/>
            <person name="Tice H."/>
            <person name="Pitluck S."/>
            <person name="Chertkov O."/>
            <person name="Brettin T."/>
            <person name="Bruce D."/>
            <person name="Detter J.C."/>
            <person name="Han C."/>
            <person name="Schmutz J."/>
            <person name="Larimer F."/>
            <person name="Land M."/>
            <person name="Hauser L."/>
            <person name="Kyrpides N."/>
            <person name="Kim E."/>
            <person name="Zhao J.-S."/>
            <person name="Richardson P."/>
        </authorList>
    </citation>
    <scope>NUCLEOTIDE SEQUENCE [LARGE SCALE GENOMIC DNA]</scope>
    <source>
        <strain>HAW-EB3</strain>
    </source>
</reference>
<feature type="chain" id="PRO_1000085409" description="N-succinylglutamate 5-semialdehyde dehydrogenase">
    <location>
        <begin position="1"/>
        <end position="486"/>
    </location>
</feature>
<feature type="active site" evidence="1">
    <location>
        <position position="243"/>
    </location>
</feature>
<feature type="active site" evidence="1">
    <location>
        <position position="277"/>
    </location>
</feature>
<feature type="binding site" evidence="1">
    <location>
        <begin position="220"/>
        <end position="225"/>
    </location>
    <ligand>
        <name>NAD(+)</name>
        <dbReference type="ChEBI" id="CHEBI:57540"/>
    </ligand>
</feature>
<evidence type="ECO:0000255" key="1">
    <source>
        <dbReference type="HAMAP-Rule" id="MF_01174"/>
    </source>
</evidence>
<organism>
    <name type="scientific">Shewanella sediminis (strain HAW-EB3)</name>
    <dbReference type="NCBI Taxonomy" id="425104"/>
    <lineage>
        <taxon>Bacteria</taxon>
        <taxon>Pseudomonadati</taxon>
        <taxon>Pseudomonadota</taxon>
        <taxon>Gammaproteobacteria</taxon>
        <taxon>Alteromonadales</taxon>
        <taxon>Shewanellaceae</taxon>
        <taxon>Shewanella</taxon>
    </lineage>
</organism>
<gene>
    <name evidence="1" type="primary">astD</name>
    <name type="ordered locus">Ssed_0811</name>
</gene>
<sequence length="486" mass="51867">MTQFIKGQWVAGLGHAVTSKNPANNDVIWNSQTATPEQVNTAVEAAREVQFDWFMLGFEARLAIVEAYRAQLEENKAEIAETIAQETGKPQWETATEAGAMIGKIGLSVAAYNKRTGTSENDTPAGRAVLRHKPHGVVAVFGPYNFPGHLPNGHIVPALLAGNTVVFKPSELTPKVAELMLKLWEKAGLPAGVINLVQGEVETGKALASHPQIDGLFFTGSSRTGHILHQQYAGEPGKILALEMGGNNPLIIKGVKDSKAAVHDIIQSAYISSGQRCTCARRLYVEKGAEGDALLAQLTDAVKRIVVGAWNAQPQPFMGAMISETAAKGMVEAQRNLVNLGGHSLVELTHIEEGTGLVSPGLIDVSQVIELPDEEYFGPLLQVVRYTDFDEAIKLANNTRYGLSAGILADSRDDYEYFLARIRAGIVNWNKQITGASGAAPFGGVGASGNHRASAFYAADYCAYPVASVEADEVSLPANLSPGLSL</sequence>
<protein>
    <recommendedName>
        <fullName evidence="1">N-succinylglutamate 5-semialdehyde dehydrogenase</fullName>
        <ecNumber evidence="1">1.2.1.71</ecNumber>
    </recommendedName>
    <alternativeName>
        <fullName evidence="1">Succinylglutamic semialdehyde dehydrogenase</fullName>
        <shortName evidence="1">SGSD</shortName>
    </alternativeName>
</protein>
<name>ASTD_SHESH</name>
<keyword id="KW-0056">Arginine metabolism</keyword>
<keyword id="KW-0520">NAD</keyword>
<keyword id="KW-0560">Oxidoreductase</keyword>
<keyword id="KW-1185">Reference proteome</keyword>
<dbReference type="EC" id="1.2.1.71" evidence="1"/>
<dbReference type="EMBL" id="CP000821">
    <property type="protein sequence ID" value="ABV35422.1"/>
    <property type="molecule type" value="Genomic_DNA"/>
</dbReference>
<dbReference type="RefSeq" id="WP_012141158.1">
    <property type="nucleotide sequence ID" value="NC_009831.1"/>
</dbReference>
<dbReference type="SMR" id="A8FRE9"/>
<dbReference type="STRING" id="425104.Ssed_0811"/>
<dbReference type="KEGG" id="sse:Ssed_0811"/>
<dbReference type="eggNOG" id="COG1012">
    <property type="taxonomic scope" value="Bacteria"/>
</dbReference>
<dbReference type="HOGENOM" id="CLU_005391_1_0_6"/>
<dbReference type="OrthoDB" id="9812625at2"/>
<dbReference type="UniPathway" id="UPA00185">
    <property type="reaction ID" value="UER00282"/>
</dbReference>
<dbReference type="Proteomes" id="UP000002015">
    <property type="component" value="Chromosome"/>
</dbReference>
<dbReference type="GO" id="GO:0043824">
    <property type="term" value="F:succinylglutamate-semialdehyde dehydrogenase activity"/>
    <property type="evidence" value="ECO:0007669"/>
    <property type="project" value="UniProtKB-EC"/>
</dbReference>
<dbReference type="GO" id="GO:0019544">
    <property type="term" value="P:arginine catabolic process to glutamate"/>
    <property type="evidence" value="ECO:0007669"/>
    <property type="project" value="UniProtKB-UniRule"/>
</dbReference>
<dbReference type="GO" id="GO:0019545">
    <property type="term" value="P:arginine catabolic process to succinate"/>
    <property type="evidence" value="ECO:0007669"/>
    <property type="project" value="UniProtKB-UniRule"/>
</dbReference>
<dbReference type="CDD" id="cd07095">
    <property type="entry name" value="ALDH_SGSD_AstD"/>
    <property type="match status" value="1"/>
</dbReference>
<dbReference type="FunFam" id="3.40.309.10:FF:000013">
    <property type="entry name" value="N-succinylglutamate 5-semialdehyde dehydrogenase"/>
    <property type="match status" value="1"/>
</dbReference>
<dbReference type="FunFam" id="3.40.605.10:FF:000010">
    <property type="entry name" value="N-succinylglutamate 5-semialdehyde dehydrogenase"/>
    <property type="match status" value="1"/>
</dbReference>
<dbReference type="Gene3D" id="3.40.605.10">
    <property type="entry name" value="Aldehyde Dehydrogenase, Chain A, domain 1"/>
    <property type="match status" value="1"/>
</dbReference>
<dbReference type="Gene3D" id="3.40.309.10">
    <property type="entry name" value="Aldehyde Dehydrogenase, Chain A, domain 2"/>
    <property type="match status" value="1"/>
</dbReference>
<dbReference type="HAMAP" id="MF_01174">
    <property type="entry name" value="Aldedh_AstD"/>
    <property type="match status" value="1"/>
</dbReference>
<dbReference type="InterPro" id="IPR016161">
    <property type="entry name" value="Ald_DH/histidinol_DH"/>
</dbReference>
<dbReference type="InterPro" id="IPR016163">
    <property type="entry name" value="Ald_DH_C"/>
</dbReference>
<dbReference type="InterPro" id="IPR016160">
    <property type="entry name" value="Ald_DH_CS_CYS"/>
</dbReference>
<dbReference type="InterPro" id="IPR029510">
    <property type="entry name" value="Ald_DH_CS_GLU"/>
</dbReference>
<dbReference type="InterPro" id="IPR016162">
    <property type="entry name" value="Ald_DH_N"/>
</dbReference>
<dbReference type="InterPro" id="IPR015590">
    <property type="entry name" value="Aldehyde_DH_dom"/>
</dbReference>
<dbReference type="InterPro" id="IPR017649">
    <property type="entry name" value="SuccinylGlu_semiald_DH_AstD"/>
</dbReference>
<dbReference type="NCBIfam" id="TIGR03240">
    <property type="entry name" value="arg_catab_astD"/>
    <property type="match status" value="1"/>
</dbReference>
<dbReference type="NCBIfam" id="NF006992">
    <property type="entry name" value="PRK09457.1"/>
    <property type="match status" value="1"/>
</dbReference>
<dbReference type="PANTHER" id="PTHR11699">
    <property type="entry name" value="ALDEHYDE DEHYDROGENASE-RELATED"/>
    <property type="match status" value="1"/>
</dbReference>
<dbReference type="Pfam" id="PF00171">
    <property type="entry name" value="Aldedh"/>
    <property type="match status" value="1"/>
</dbReference>
<dbReference type="SUPFAM" id="SSF53720">
    <property type="entry name" value="ALDH-like"/>
    <property type="match status" value="1"/>
</dbReference>
<dbReference type="PROSITE" id="PS00070">
    <property type="entry name" value="ALDEHYDE_DEHYDR_CYS"/>
    <property type="match status" value="1"/>
</dbReference>
<dbReference type="PROSITE" id="PS00687">
    <property type="entry name" value="ALDEHYDE_DEHYDR_GLU"/>
    <property type="match status" value="1"/>
</dbReference>
<proteinExistence type="inferred from homology"/>
<accession>A8FRE9</accession>